<organism>
    <name type="scientific">Mycobacterium tuberculosis (strain CDC 1551 / Oshkosh)</name>
    <dbReference type="NCBI Taxonomy" id="83331"/>
    <lineage>
        <taxon>Bacteria</taxon>
        <taxon>Bacillati</taxon>
        <taxon>Actinomycetota</taxon>
        <taxon>Actinomycetes</taxon>
        <taxon>Mycobacteriales</taxon>
        <taxon>Mycobacteriaceae</taxon>
        <taxon>Mycobacterium</taxon>
        <taxon>Mycobacterium tuberculosis complex</taxon>
    </lineage>
</organism>
<dbReference type="EC" id="3.1.-.-" evidence="2"/>
<dbReference type="EMBL" id="AE000516">
    <property type="protein sequence ID" value="AAK47209.1"/>
    <property type="molecule type" value="Genomic_DNA"/>
</dbReference>
<dbReference type="PIR" id="D70691">
    <property type="entry name" value="D70691"/>
</dbReference>
<dbReference type="RefSeq" id="WP_003414279.1">
    <property type="nucleotide sequence ID" value="NZ_KK341227.1"/>
</dbReference>
<dbReference type="SMR" id="P9WPJ4"/>
<dbReference type="GeneID" id="45426805"/>
<dbReference type="KEGG" id="mtc:MT2884"/>
<dbReference type="PATRIC" id="fig|83331.31.peg.3113"/>
<dbReference type="HOGENOM" id="CLU_052779_1_1_11"/>
<dbReference type="Proteomes" id="UP000001020">
    <property type="component" value="Chromosome"/>
</dbReference>
<dbReference type="GO" id="GO:0003677">
    <property type="term" value="F:DNA binding"/>
    <property type="evidence" value="ECO:0007669"/>
    <property type="project" value="UniProtKB-KW"/>
</dbReference>
<dbReference type="GO" id="GO:0004519">
    <property type="term" value="F:endonuclease activity"/>
    <property type="evidence" value="ECO:0007669"/>
    <property type="project" value="UniProtKB-UniRule"/>
</dbReference>
<dbReference type="GO" id="GO:0046872">
    <property type="term" value="F:metal ion binding"/>
    <property type="evidence" value="ECO:0007669"/>
    <property type="project" value="UniProtKB-UniRule"/>
</dbReference>
<dbReference type="GO" id="GO:0051607">
    <property type="term" value="P:defense response to virus"/>
    <property type="evidence" value="ECO:0007669"/>
    <property type="project" value="UniProtKB-UniRule"/>
</dbReference>
<dbReference type="GO" id="GO:0043571">
    <property type="term" value="P:maintenance of CRISPR repeat elements"/>
    <property type="evidence" value="ECO:0007669"/>
    <property type="project" value="UniProtKB-UniRule"/>
</dbReference>
<dbReference type="CDD" id="cd09636">
    <property type="entry name" value="Cas1_I-II-III"/>
    <property type="match status" value="1"/>
</dbReference>
<dbReference type="Gene3D" id="1.20.120.920">
    <property type="entry name" value="CRISPR-associated endonuclease Cas1, C-terminal domain"/>
    <property type="match status" value="1"/>
</dbReference>
<dbReference type="Gene3D" id="3.100.10.20">
    <property type="entry name" value="CRISPR-associated endonuclease Cas1, N-terminal domain"/>
    <property type="match status" value="1"/>
</dbReference>
<dbReference type="HAMAP" id="MF_01470">
    <property type="entry name" value="Cas1"/>
    <property type="match status" value="1"/>
</dbReference>
<dbReference type="InterPro" id="IPR050646">
    <property type="entry name" value="Cas1"/>
</dbReference>
<dbReference type="InterPro" id="IPR002729">
    <property type="entry name" value="CRISPR-assoc_Cas1"/>
</dbReference>
<dbReference type="InterPro" id="IPR042206">
    <property type="entry name" value="CRISPR-assoc_Cas1_C"/>
</dbReference>
<dbReference type="InterPro" id="IPR042211">
    <property type="entry name" value="CRISPR-assoc_Cas1_N"/>
</dbReference>
<dbReference type="NCBIfam" id="TIGR00287">
    <property type="entry name" value="cas1"/>
    <property type="match status" value="1"/>
</dbReference>
<dbReference type="PANTHER" id="PTHR34353">
    <property type="entry name" value="CRISPR-ASSOCIATED ENDONUCLEASE CAS1 1"/>
    <property type="match status" value="1"/>
</dbReference>
<dbReference type="PANTHER" id="PTHR34353:SF2">
    <property type="entry name" value="CRISPR-ASSOCIATED ENDONUCLEASE CAS1 1"/>
    <property type="match status" value="1"/>
</dbReference>
<dbReference type="Pfam" id="PF01867">
    <property type="entry name" value="Cas_Cas1"/>
    <property type="match status" value="1"/>
</dbReference>
<comment type="function">
    <text evidence="1 2">CRISPR (clustered regularly interspaced short palindromic repeat), is an adaptive immune system that provides protection against mobile genetic elements (viruses, transposable elements and conjugative plasmids). CRISPR clusters contain spacers, sequences complementary to antecedent mobile elements, and target invading nucleic acids. CRISPR clusters are transcribed and processed into CRISPR RNA (crRNA). Acts as a dsDNA endonuclease. Involved in the integration of spacer DNA into the CRISPR cassette (By similarity). The type III-A Csm effector complex binds crRNA and acts as a crRNA-guided RNase, DNase and cyclic oligoadenylate synthase; binding of target RNA cognate to the crRNA is required for all activities (By similarity).</text>
</comment>
<comment type="cofactor">
    <cofactor evidence="2">
        <name>Mg(2+)</name>
        <dbReference type="ChEBI" id="CHEBI:18420"/>
    </cofactor>
    <cofactor evidence="2">
        <name>Mn(2+)</name>
        <dbReference type="ChEBI" id="CHEBI:29035"/>
    </cofactor>
</comment>
<comment type="subunit">
    <text evidence="2">Homodimer, forms a heterotetramer with a Cas2 homodimer.</text>
</comment>
<comment type="miscellaneous">
    <text evidence="3">Encoded in a type III-A CRISPR locus.</text>
</comment>
<comment type="similarity">
    <text evidence="2">Belongs to the CRISPR-associated endonuclease Cas1 family.</text>
</comment>
<sequence length="338" mass="37664">MVQLYVSDSVSRISFADGRVIVWSEELGESQYPIETLDGITLFGRPTMTTPFIVEMLKRERDIQLFTTDGHYQGRISTPDVSYAPRLRQQVHRTDDPAFCLSLSKRIVSRKILNQQALIRAHTSGQDVAESIRTMKHSLAWVDRSGSLAELNGFEGNAAKAYFTALGHLVPQEFAFQGRSTRPPLDAFNSMVSLGYSLLYKNIIGAIERHSLNAYIGFLHQDSRGHATLASDLMEVWRAPIIDDTVLRLIADGVVDTRAFSKNSDTGAVFATREATRSIARAFGNRIARTATYIKGDPHRYTFQYALDLQLQSLVRVIEAGHPSRLVDIDITSEPSGA</sequence>
<feature type="chain" id="PRO_0000426941" description="CRISPR-associated endonuclease Cas1">
    <location>
        <begin position="1"/>
        <end position="338"/>
    </location>
</feature>
<feature type="binding site" evidence="2">
    <location>
        <position position="155"/>
    </location>
    <ligand>
        <name>Mn(2+)</name>
        <dbReference type="ChEBI" id="CHEBI:29035"/>
    </ligand>
</feature>
<feature type="binding site" evidence="2">
    <location>
        <position position="220"/>
    </location>
    <ligand>
        <name>Mn(2+)</name>
        <dbReference type="ChEBI" id="CHEBI:29035"/>
    </ligand>
</feature>
<feature type="binding site" evidence="2">
    <location>
        <position position="235"/>
    </location>
    <ligand>
        <name>Mn(2+)</name>
        <dbReference type="ChEBI" id="CHEBI:29035"/>
    </ligand>
</feature>
<evidence type="ECO:0000250" key="1">
    <source>
        <dbReference type="UniProtKB" id="P9WPJ5"/>
    </source>
</evidence>
<evidence type="ECO:0000255" key="2">
    <source>
        <dbReference type="HAMAP-Rule" id="MF_01470"/>
    </source>
</evidence>
<evidence type="ECO:0000305" key="3"/>
<protein>
    <recommendedName>
        <fullName evidence="2">CRISPR-associated endonuclease Cas1</fullName>
        <ecNumber evidence="2">3.1.-.-</ecNumber>
    </recommendedName>
</protein>
<keyword id="KW-0051">Antiviral defense</keyword>
<keyword id="KW-0238">DNA-binding</keyword>
<keyword id="KW-0255">Endonuclease</keyword>
<keyword id="KW-0378">Hydrolase</keyword>
<keyword id="KW-0460">Magnesium</keyword>
<keyword id="KW-0464">Manganese</keyword>
<keyword id="KW-0479">Metal-binding</keyword>
<keyword id="KW-0540">Nuclease</keyword>
<keyword id="KW-1185">Reference proteome</keyword>
<accession>P9WPJ4</accession>
<accession>F2GLB7</accession>
<accession>L0TDM9</accession>
<accession>P71636</accession>
<accession>Q7D6I7</accession>
<proteinExistence type="inferred from homology"/>
<name>CAS1_MYCTO</name>
<gene>
    <name evidence="2" type="primary">cas1</name>
    <name type="ordered locus">MT2884</name>
</gene>
<reference key="1">
    <citation type="journal article" date="2002" name="J. Bacteriol.">
        <title>Whole-genome comparison of Mycobacterium tuberculosis clinical and laboratory strains.</title>
        <authorList>
            <person name="Fleischmann R.D."/>
            <person name="Alland D."/>
            <person name="Eisen J.A."/>
            <person name="Carpenter L."/>
            <person name="White O."/>
            <person name="Peterson J.D."/>
            <person name="DeBoy R.T."/>
            <person name="Dodson R.J."/>
            <person name="Gwinn M.L."/>
            <person name="Haft D.H."/>
            <person name="Hickey E.K."/>
            <person name="Kolonay J.F."/>
            <person name="Nelson W.C."/>
            <person name="Umayam L.A."/>
            <person name="Ermolaeva M.D."/>
            <person name="Salzberg S.L."/>
            <person name="Delcher A."/>
            <person name="Utterback T.R."/>
            <person name="Weidman J.F."/>
            <person name="Khouri H.M."/>
            <person name="Gill J."/>
            <person name="Mikula A."/>
            <person name="Bishai W."/>
            <person name="Jacobs W.R. Jr."/>
            <person name="Venter J.C."/>
            <person name="Fraser C.M."/>
        </authorList>
    </citation>
    <scope>NUCLEOTIDE SEQUENCE [LARGE SCALE GENOMIC DNA]</scope>
    <source>
        <strain>CDC 1551 / Oshkosh</strain>
    </source>
</reference>